<feature type="chain" id="PRO_0000307959" description="Large ribosomal subunit protein uL1">
    <location>
        <begin position="1"/>
        <end position="235"/>
    </location>
</feature>
<keyword id="KW-1185">Reference proteome</keyword>
<keyword id="KW-0678">Repressor</keyword>
<keyword id="KW-0687">Ribonucleoprotein</keyword>
<keyword id="KW-0689">Ribosomal protein</keyword>
<keyword id="KW-0694">RNA-binding</keyword>
<keyword id="KW-0699">rRNA-binding</keyword>
<keyword id="KW-0810">Translation regulation</keyword>
<keyword id="KW-0820">tRNA-binding</keyword>
<dbReference type="EMBL" id="CP000454">
    <property type="protein sequence ID" value="ABK04372.1"/>
    <property type="molecule type" value="Genomic_DNA"/>
</dbReference>
<dbReference type="RefSeq" id="WP_011692825.1">
    <property type="nucleotide sequence ID" value="NC_008541.1"/>
</dbReference>
<dbReference type="SMR" id="A0JZA2"/>
<dbReference type="STRING" id="290399.Arth_2993"/>
<dbReference type="KEGG" id="art:Arth_2993"/>
<dbReference type="eggNOG" id="COG0081">
    <property type="taxonomic scope" value="Bacteria"/>
</dbReference>
<dbReference type="HOGENOM" id="CLU_062853_0_0_11"/>
<dbReference type="OrthoDB" id="9803740at2"/>
<dbReference type="Proteomes" id="UP000000754">
    <property type="component" value="Chromosome"/>
</dbReference>
<dbReference type="GO" id="GO:0015934">
    <property type="term" value="C:large ribosomal subunit"/>
    <property type="evidence" value="ECO:0007669"/>
    <property type="project" value="InterPro"/>
</dbReference>
<dbReference type="GO" id="GO:0019843">
    <property type="term" value="F:rRNA binding"/>
    <property type="evidence" value="ECO:0007669"/>
    <property type="project" value="UniProtKB-UniRule"/>
</dbReference>
<dbReference type="GO" id="GO:0003735">
    <property type="term" value="F:structural constituent of ribosome"/>
    <property type="evidence" value="ECO:0007669"/>
    <property type="project" value="InterPro"/>
</dbReference>
<dbReference type="GO" id="GO:0000049">
    <property type="term" value="F:tRNA binding"/>
    <property type="evidence" value="ECO:0007669"/>
    <property type="project" value="UniProtKB-KW"/>
</dbReference>
<dbReference type="GO" id="GO:0006417">
    <property type="term" value="P:regulation of translation"/>
    <property type="evidence" value="ECO:0007669"/>
    <property type="project" value="UniProtKB-KW"/>
</dbReference>
<dbReference type="GO" id="GO:0006412">
    <property type="term" value="P:translation"/>
    <property type="evidence" value="ECO:0007669"/>
    <property type="project" value="UniProtKB-UniRule"/>
</dbReference>
<dbReference type="CDD" id="cd00403">
    <property type="entry name" value="Ribosomal_L1"/>
    <property type="match status" value="1"/>
</dbReference>
<dbReference type="FunFam" id="3.40.50.790:FF:000001">
    <property type="entry name" value="50S ribosomal protein L1"/>
    <property type="match status" value="1"/>
</dbReference>
<dbReference type="Gene3D" id="3.30.190.20">
    <property type="match status" value="1"/>
</dbReference>
<dbReference type="Gene3D" id="3.40.50.790">
    <property type="match status" value="1"/>
</dbReference>
<dbReference type="HAMAP" id="MF_01318_B">
    <property type="entry name" value="Ribosomal_uL1_B"/>
    <property type="match status" value="1"/>
</dbReference>
<dbReference type="InterPro" id="IPR005878">
    <property type="entry name" value="Ribosom_uL1_bac-type"/>
</dbReference>
<dbReference type="InterPro" id="IPR002143">
    <property type="entry name" value="Ribosomal_uL1"/>
</dbReference>
<dbReference type="InterPro" id="IPR023674">
    <property type="entry name" value="Ribosomal_uL1-like"/>
</dbReference>
<dbReference type="InterPro" id="IPR028364">
    <property type="entry name" value="Ribosomal_uL1/biogenesis"/>
</dbReference>
<dbReference type="InterPro" id="IPR016095">
    <property type="entry name" value="Ribosomal_uL1_3-a/b-sand"/>
</dbReference>
<dbReference type="InterPro" id="IPR023673">
    <property type="entry name" value="Ribosomal_uL1_CS"/>
</dbReference>
<dbReference type="NCBIfam" id="TIGR01169">
    <property type="entry name" value="rplA_bact"/>
    <property type="match status" value="1"/>
</dbReference>
<dbReference type="PANTHER" id="PTHR36427">
    <property type="entry name" value="54S RIBOSOMAL PROTEIN L1, MITOCHONDRIAL"/>
    <property type="match status" value="1"/>
</dbReference>
<dbReference type="PANTHER" id="PTHR36427:SF3">
    <property type="entry name" value="LARGE RIBOSOMAL SUBUNIT PROTEIN UL1M"/>
    <property type="match status" value="1"/>
</dbReference>
<dbReference type="Pfam" id="PF00687">
    <property type="entry name" value="Ribosomal_L1"/>
    <property type="match status" value="1"/>
</dbReference>
<dbReference type="PIRSF" id="PIRSF002155">
    <property type="entry name" value="Ribosomal_L1"/>
    <property type="match status" value="1"/>
</dbReference>
<dbReference type="SUPFAM" id="SSF56808">
    <property type="entry name" value="Ribosomal protein L1"/>
    <property type="match status" value="1"/>
</dbReference>
<dbReference type="PROSITE" id="PS01199">
    <property type="entry name" value="RIBOSOMAL_L1"/>
    <property type="match status" value="1"/>
</dbReference>
<protein>
    <recommendedName>
        <fullName evidence="1">Large ribosomal subunit protein uL1</fullName>
    </recommendedName>
    <alternativeName>
        <fullName evidence="2">50S ribosomal protein L1</fullName>
    </alternativeName>
</protein>
<sequence length="235" mass="24928">MAKRSKAYEAAAAKIDAEKFYAPFEAVTLAKDTNPSKFDATVEVAFRLGVDPRKADQMVRGTVNLPHGTGKVARVLVFATGDKAEAAIAAGADFVGSDDLIEKIAAGWTDFDAAVATPDLMGKVGRLGKVLGPRNLMPNPKTGTVTPDVTKAVNDIKGGKIDFRVDKHSNLHFIIGKVSFDAIKLAENYAAALEEVLRLKPSASKGRYIQKATVATTFGPGISVDPNVTKVLTEV</sequence>
<evidence type="ECO:0000255" key="1">
    <source>
        <dbReference type="HAMAP-Rule" id="MF_01318"/>
    </source>
</evidence>
<evidence type="ECO:0000305" key="2"/>
<reference key="1">
    <citation type="journal article" date="2013" name="Stand. Genomic Sci.">
        <title>Complete genome sequence of Arthrobacter sp. strain FB24.</title>
        <authorList>
            <person name="Nakatsu C.H."/>
            <person name="Barabote R."/>
            <person name="Thompson S."/>
            <person name="Bruce D."/>
            <person name="Detter C."/>
            <person name="Brettin T."/>
            <person name="Han C."/>
            <person name="Beasley F."/>
            <person name="Chen W."/>
            <person name="Konopka A."/>
            <person name="Xie G."/>
        </authorList>
    </citation>
    <scope>NUCLEOTIDE SEQUENCE [LARGE SCALE GENOMIC DNA]</scope>
    <source>
        <strain>FB24</strain>
    </source>
</reference>
<comment type="function">
    <text evidence="1">Binds directly to 23S rRNA. The L1 stalk is quite mobile in the ribosome, and is involved in E site tRNA release.</text>
</comment>
<comment type="function">
    <text evidence="1">Protein L1 is also a translational repressor protein, it controls the translation of the L11 operon by binding to its mRNA.</text>
</comment>
<comment type="subunit">
    <text evidence="1">Part of the 50S ribosomal subunit.</text>
</comment>
<comment type="similarity">
    <text evidence="1">Belongs to the universal ribosomal protein uL1 family.</text>
</comment>
<proteinExistence type="inferred from homology"/>
<accession>A0JZA2</accession>
<organism>
    <name type="scientific">Arthrobacter sp. (strain FB24)</name>
    <dbReference type="NCBI Taxonomy" id="290399"/>
    <lineage>
        <taxon>Bacteria</taxon>
        <taxon>Bacillati</taxon>
        <taxon>Actinomycetota</taxon>
        <taxon>Actinomycetes</taxon>
        <taxon>Micrococcales</taxon>
        <taxon>Micrococcaceae</taxon>
        <taxon>Arthrobacter</taxon>
    </lineage>
</organism>
<gene>
    <name evidence="1" type="primary">rplA</name>
    <name type="ordered locus">Arth_2993</name>
</gene>
<name>RL1_ARTS2</name>